<feature type="chain" id="PRO_0000047386" description="Zinc finger protein 76">
    <location>
        <begin position="1"/>
        <end position="570"/>
    </location>
</feature>
<feature type="repeat" description="1">
    <location>
        <begin position="34"/>
        <end position="45"/>
    </location>
</feature>
<feature type="repeat" description="2">
    <location>
        <begin position="62"/>
        <end position="73"/>
    </location>
</feature>
<feature type="repeat" description="3">
    <location>
        <begin position="88"/>
        <end position="99"/>
    </location>
</feature>
<feature type="zinc finger region" description="C2H2-type 1" evidence="1">
    <location>
        <begin position="165"/>
        <end position="189"/>
    </location>
</feature>
<feature type="zinc finger region" description="C2H2-type 2" evidence="1">
    <location>
        <begin position="195"/>
        <end position="219"/>
    </location>
</feature>
<feature type="zinc finger region" description="C2H2-type 3" evidence="1">
    <location>
        <begin position="225"/>
        <end position="249"/>
    </location>
</feature>
<feature type="zinc finger region" description="C2H2-type 4" evidence="1">
    <location>
        <begin position="255"/>
        <end position="279"/>
    </location>
</feature>
<feature type="zinc finger region" description="C2H2-type 5" evidence="1">
    <location>
        <begin position="285"/>
        <end position="309"/>
    </location>
</feature>
<feature type="zinc finger region" description="C2H2-type 6" evidence="1">
    <location>
        <begin position="315"/>
        <end position="339"/>
    </location>
</feature>
<feature type="zinc finger region" description="C2H2-type 7" evidence="1">
    <location>
        <begin position="345"/>
        <end position="368"/>
    </location>
</feature>
<feature type="region of interest" description="3 X 12 AA approximate repeats">
    <location>
        <begin position="34"/>
        <end position="99"/>
    </location>
</feature>
<feature type="region of interest" description="Disordered" evidence="2">
    <location>
        <begin position="365"/>
        <end position="401"/>
    </location>
</feature>
<feature type="compositionally biased region" description="Low complexity" evidence="2">
    <location>
        <begin position="379"/>
        <end position="395"/>
    </location>
</feature>
<feature type="cross-link" description="Glycyl lysine isopeptide (Lys-Gly) (interchain with G-Cter in SUMO2)" evidence="5">
    <location>
        <position position="24"/>
    </location>
</feature>
<feature type="splice variant" id="VSP_006894" description="In isoform 1." evidence="3">
    <location>
        <begin position="444"/>
        <end position="498"/>
    </location>
</feature>
<feature type="sequence variant" id="VAR_033546" description="In dbSNP:rs2228265.">
    <original>T</original>
    <variation>M</variation>
    <location>
        <position position="48"/>
    </location>
</feature>
<feature type="sequence variant" id="VAR_033547" description="In dbSNP:rs33959228.">
    <original>R</original>
    <variation>C</variation>
    <location>
        <position position="272"/>
    </location>
</feature>
<feature type="sequence variant" id="VAR_033548" description="In dbSNP:rs35582935.">
    <original>R</original>
    <variation>Q</variation>
    <location>
        <position position="403"/>
    </location>
</feature>
<feature type="sequence conflict" description="In Ref. 1; AAA98739." evidence="4" ref="1">
    <original>KH</original>
    <variation>ND</variation>
    <location>
        <begin position="334"/>
        <end position="335"/>
    </location>
</feature>
<dbReference type="EMBL" id="M91592">
    <property type="protein sequence ID" value="AAA98739.1"/>
    <property type="molecule type" value="mRNA"/>
</dbReference>
<dbReference type="EMBL" id="BT007316">
    <property type="protein sequence ID" value="AAP35980.1"/>
    <property type="molecule type" value="mRNA"/>
</dbReference>
<dbReference type="EMBL" id="BC000133">
    <property type="protein sequence ID" value="AAH00133.1"/>
    <property type="molecule type" value="mRNA"/>
</dbReference>
<dbReference type="EMBL" id="BC002549">
    <property type="protein sequence ID" value="AAH02549.1"/>
    <property type="molecule type" value="mRNA"/>
</dbReference>
<dbReference type="CCDS" id="CCDS4801.1">
    <molecule id="P36508-1"/>
</dbReference>
<dbReference type="CCDS" id="CCDS75435.1">
    <molecule id="P36508-2"/>
</dbReference>
<dbReference type="PIR" id="A44256">
    <property type="entry name" value="A44256"/>
</dbReference>
<dbReference type="RefSeq" id="NP_001278961.1">
    <molecule id="P36508-2"/>
    <property type="nucleotide sequence ID" value="NM_001292032.2"/>
</dbReference>
<dbReference type="RefSeq" id="NP_003418.2">
    <molecule id="P36508-1"/>
    <property type="nucleotide sequence ID" value="NM_003427.4"/>
</dbReference>
<dbReference type="RefSeq" id="XP_016866738.1">
    <molecule id="P36508-1"/>
    <property type="nucleotide sequence ID" value="XM_017011249.3"/>
</dbReference>
<dbReference type="RefSeq" id="XP_016866745.1">
    <molecule id="P36508-2"/>
    <property type="nucleotide sequence ID" value="XM_017011256.2"/>
</dbReference>
<dbReference type="RefSeq" id="XP_054212293.1">
    <molecule id="P36508-1"/>
    <property type="nucleotide sequence ID" value="XM_054356318.1"/>
</dbReference>
<dbReference type="RefSeq" id="XP_054212301.1">
    <molecule id="P36508-2"/>
    <property type="nucleotide sequence ID" value="XM_054356326.1"/>
</dbReference>
<dbReference type="SMR" id="P36508"/>
<dbReference type="BioGRID" id="113448">
    <property type="interactions" value="104"/>
</dbReference>
<dbReference type="FunCoup" id="P36508">
    <property type="interactions" value="1357"/>
</dbReference>
<dbReference type="IntAct" id="P36508">
    <property type="interactions" value="87"/>
</dbReference>
<dbReference type="MINT" id="P36508"/>
<dbReference type="STRING" id="9606.ENSP00000363064"/>
<dbReference type="iPTMnet" id="P36508"/>
<dbReference type="PhosphoSitePlus" id="P36508"/>
<dbReference type="BioMuta" id="ZNF76"/>
<dbReference type="DMDM" id="20455531"/>
<dbReference type="jPOST" id="P36508"/>
<dbReference type="MassIVE" id="P36508"/>
<dbReference type="PaxDb" id="9606-ENSP00000363064"/>
<dbReference type="PeptideAtlas" id="P36508"/>
<dbReference type="ProteomicsDB" id="55204">
    <molecule id="P36508-1"/>
</dbReference>
<dbReference type="ProteomicsDB" id="55205">
    <molecule id="P36508-2"/>
</dbReference>
<dbReference type="Antibodypedia" id="15181">
    <property type="antibodies" value="129 antibodies from 26 providers"/>
</dbReference>
<dbReference type="DNASU" id="7629"/>
<dbReference type="Ensembl" id="ENST00000339411.5">
    <molecule id="P36508-2"/>
    <property type="protein sequence ID" value="ENSP00000344097.5"/>
    <property type="gene ID" value="ENSG00000065029.15"/>
</dbReference>
<dbReference type="Ensembl" id="ENST00000373953.8">
    <molecule id="P36508-1"/>
    <property type="protein sequence ID" value="ENSP00000363064.3"/>
    <property type="gene ID" value="ENSG00000065029.15"/>
</dbReference>
<dbReference type="GeneID" id="7629"/>
<dbReference type="KEGG" id="hsa:7629"/>
<dbReference type="MANE-Select" id="ENST00000373953.8">
    <property type="protein sequence ID" value="ENSP00000363064.3"/>
    <property type="RefSeq nucleotide sequence ID" value="NM_003427.5"/>
    <property type="RefSeq protein sequence ID" value="NP_003418.2"/>
</dbReference>
<dbReference type="UCSC" id="uc003oki.2">
    <molecule id="P36508-1"/>
    <property type="organism name" value="human"/>
</dbReference>
<dbReference type="AGR" id="HGNC:13149"/>
<dbReference type="CTD" id="7629"/>
<dbReference type="DisGeNET" id="7629"/>
<dbReference type="GeneCards" id="ZNF76"/>
<dbReference type="HGNC" id="HGNC:13149">
    <property type="gene designation" value="ZNF76"/>
</dbReference>
<dbReference type="HPA" id="ENSG00000065029">
    <property type="expression patterns" value="Low tissue specificity"/>
</dbReference>
<dbReference type="MIM" id="194549">
    <property type="type" value="gene"/>
</dbReference>
<dbReference type="neXtProt" id="NX_P36508"/>
<dbReference type="OpenTargets" id="ENSG00000065029"/>
<dbReference type="PharmGKB" id="PA37723"/>
<dbReference type="VEuPathDB" id="HostDB:ENSG00000065029"/>
<dbReference type="eggNOG" id="KOG1721">
    <property type="taxonomic scope" value="Eukaryota"/>
</dbReference>
<dbReference type="GeneTree" id="ENSGT00940000160911"/>
<dbReference type="HOGENOM" id="CLU_027168_0_0_1"/>
<dbReference type="InParanoid" id="P36508"/>
<dbReference type="OMA" id="HCKPYSC"/>
<dbReference type="OrthoDB" id="6077919at2759"/>
<dbReference type="PAN-GO" id="P36508">
    <property type="GO annotations" value="3 GO annotations based on evolutionary models"/>
</dbReference>
<dbReference type="PhylomeDB" id="P36508"/>
<dbReference type="TreeFam" id="TF333498"/>
<dbReference type="PathwayCommons" id="P36508"/>
<dbReference type="SignaLink" id="P36508"/>
<dbReference type="SIGNOR" id="P36508"/>
<dbReference type="BioGRID-ORCS" id="7629">
    <property type="hits" value="20 hits in 1176 CRISPR screens"/>
</dbReference>
<dbReference type="ChiTaRS" id="ZNF76">
    <property type="organism name" value="human"/>
</dbReference>
<dbReference type="GeneWiki" id="ZNF76"/>
<dbReference type="GenomeRNAi" id="7629"/>
<dbReference type="Pharos" id="P36508">
    <property type="development level" value="Tbio"/>
</dbReference>
<dbReference type="PRO" id="PR:P36508"/>
<dbReference type="Proteomes" id="UP000005640">
    <property type="component" value="Chromosome 6"/>
</dbReference>
<dbReference type="RNAct" id="P36508">
    <property type="molecule type" value="protein"/>
</dbReference>
<dbReference type="Bgee" id="ENSG00000065029">
    <property type="expression patterns" value="Expressed in right lobe of thyroid gland and 175 other cell types or tissues"/>
</dbReference>
<dbReference type="ExpressionAtlas" id="P36508">
    <property type="expression patterns" value="baseline and differential"/>
</dbReference>
<dbReference type="GO" id="GO:0005634">
    <property type="term" value="C:nucleus"/>
    <property type="evidence" value="ECO:0000318"/>
    <property type="project" value="GO_Central"/>
</dbReference>
<dbReference type="GO" id="GO:0001228">
    <property type="term" value="F:DNA-binding transcription activator activity, RNA polymerase II-specific"/>
    <property type="evidence" value="ECO:0000314"/>
    <property type="project" value="NTNU_SB"/>
</dbReference>
<dbReference type="GO" id="GO:0000981">
    <property type="term" value="F:DNA-binding transcription factor activity, RNA polymerase II-specific"/>
    <property type="evidence" value="ECO:0000318"/>
    <property type="project" value="GO_Central"/>
</dbReference>
<dbReference type="GO" id="GO:0000978">
    <property type="term" value="F:RNA polymerase II cis-regulatory region sequence-specific DNA binding"/>
    <property type="evidence" value="ECO:0000318"/>
    <property type="project" value="GO_Central"/>
</dbReference>
<dbReference type="GO" id="GO:0043565">
    <property type="term" value="F:sequence-specific DNA binding"/>
    <property type="evidence" value="ECO:0000314"/>
    <property type="project" value="NTNU_SB"/>
</dbReference>
<dbReference type="GO" id="GO:1990837">
    <property type="term" value="F:sequence-specific double-stranded DNA binding"/>
    <property type="evidence" value="ECO:0000314"/>
    <property type="project" value="ARUK-UCL"/>
</dbReference>
<dbReference type="GO" id="GO:0008270">
    <property type="term" value="F:zinc ion binding"/>
    <property type="evidence" value="ECO:0007669"/>
    <property type="project" value="UniProtKB-KW"/>
</dbReference>
<dbReference type="GO" id="GO:0045944">
    <property type="term" value="P:positive regulation of transcription by RNA polymerase II"/>
    <property type="evidence" value="ECO:0000314"/>
    <property type="project" value="NTNU_SB"/>
</dbReference>
<dbReference type="GO" id="GO:0006357">
    <property type="term" value="P:regulation of transcription by RNA polymerase II"/>
    <property type="evidence" value="ECO:0000318"/>
    <property type="project" value="GO_Central"/>
</dbReference>
<dbReference type="GO" id="GO:0006359">
    <property type="term" value="P:regulation of transcription by RNA polymerase III"/>
    <property type="evidence" value="ECO:0000304"/>
    <property type="project" value="ProtInc"/>
</dbReference>
<dbReference type="FunFam" id="3.30.160.60:FF:004334">
    <property type="match status" value="1"/>
</dbReference>
<dbReference type="FunFam" id="3.30.160.60:FF:000071">
    <property type="entry name" value="Putative zinc finger protein 143"/>
    <property type="match status" value="1"/>
</dbReference>
<dbReference type="FunFam" id="3.30.160.60:FF:000125">
    <property type="entry name" value="Putative zinc finger protein 143"/>
    <property type="match status" value="1"/>
</dbReference>
<dbReference type="FunFam" id="3.30.160.60:FF:000137">
    <property type="entry name" value="Putative zinc finger protein 143"/>
    <property type="match status" value="1"/>
</dbReference>
<dbReference type="FunFam" id="3.30.160.60:FF:000142">
    <property type="entry name" value="Putative zinc finger protein 143"/>
    <property type="match status" value="1"/>
</dbReference>
<dbReference type="FunFam" id="3.30.160.60:FF:000072">
    <property type="entry name" value="zinc finger protein 143 isoform X1"/>
    <property type="match status" value="1"/>
</dbReference>
<dbReference type="FunFam" id="3.30.160.60:FF:000236">
    <property type="entry name" value="zinc finger protein 143 isoform X1"/>
    <property type="match status" value="1"/>
</dbReference>
<dbReference type="Gene3D" id="3.30.160.60">
    <property type="entry name" value="Classic Zinc Finger"/>
    <property type="match status" value="7"/>
</dbReference>
<dbReference type="InterPro" id="IPR036236">
    <property type="entry name" value="Znf_C2H2_sf"/>
</dbReference>
<dbReference type="InterPro" id="IPR013087">
    <property type="entry name" value="Znf_C2H2_type"/>
</dbReference>
<dbReference type="PANTHER" id="PTHR14003">
    <property type="entry name" value="TRANSCRIPTIONAL REPRESSOR PROTEIN YY"/>
    <property type="match status" value="1"/>
</dbReference>
<dbReference type="PANTHER" id="PTHR14003:SF23">
    <property type="entry name" value="ZINC FINGER PROTEIN 143"/>
    <property type="match status" value="1"/>
</dbReference>
<dbReference type="Pfam" id="PF00096">
    <property type="entry name" value="zf-C2H2"/>
    <property type="match status" value="5"/>
</dbReference>
<dbReference type="SMART" id="SM00355">
    <property type="entry name" value="ZnF_C2H2"/>
    <property type="match status" value="7"/>
</dbReference>
<dbReference type="SUPFAM" id="SSF57667">
    <property type="entry name" value="beta-beta-alpha zinc fingers"/>
    <property type="match status" value="4"/>
</dbReference>
<dbReference type="PROSITE" id="PS00028">
    <property type="entry name" value="ZINC_FINGER_C2H2_1"/>
    <property type="match status" value="7"/>
</dbReference>
<dbReference type="PROSITE" id="PS50157">
    <property type="entry name" value="ZINC_FINGER_C2H2_2"/>
    <property type="match status" value="7"/>
</dbReference>
<comment type="function">
    <text>May be involved in transcriptional regulation.</text>
</comment>
<comment type="interaction">
    <interactant intactId="EBI-7254550">
        <id>P36508</id>
    </interactant>
    <interactant intactId="EBI-1047273">
        <id>Q9BWD1</id>
        <label>ACAT2</label>
    </interactant>
    <organismsDiffer>false</organismsDiffer>
    <experiments>3</experiments>
</comment>
<comment type="interaction">
    <interactant intactId="EBI-7254550">
        <id>P36508</id>
    </interactant>
    <interactant intactId="EBI-6925949">
        <id>Q9BYJ1</id>
        <label>ALOXE3</label>
    </interactant>
    <organismsDiffer>false</organismsDiffer>
    <experiments>3</experiments>
</comment>
<comment type="interaction">
    <interactant intactId="EBI-7254550">
        <id>P36508</id>
    </interactant>
    <interactant intactId="EBI-12373689">
        <id>Q7Z713</id>
        <label>ANKRD37</label>
    </interactant>
    <organismsDiffer>false</organismsDiffer>
    <experiments>3</experiments>
</comment>
<comment type="interaction">
    <interactant intactId="EBI-7254550">
        <id>P36508</id>
    </interactant>
    <interactant intactId="EBI-713602">
        <id>Q9BQD7</id>
        <label>ANTKMT</label>
    </interactant>
    <organismsDiffer>false</organismsDiffer>
    <experiments>3</experiments>
</comment>
<comment type="interaction">
    <interactant intactId="EBI-7254550">
        <id>P36508</id>
    </interactant>
    <interactant intactId="EBI-355815">
        <id>P48047</id>
        <label>ATP5PO</label>
    </interactant>
    <organismsDiffer>false</organismsDiffer>
    <experiments>3</experiments>
</comment>
<comment type="interaction">
    <interactant intactId="EBI-7254550">
        <id>P36508</id>
    </interactant>
    <interactant intactId="EBI-2548012">
        <id>Q9H2G9</id>
        <label>BLZF1</label>
    </interactant>
    <organismsDiffer>false</organismsDiffer>
    <experiments>3</experiments>
</comment>
<comment type="interaction">
    <interactant intactId="EBI-7254550">
        <id>P36508</id>
    </interactant>
    <interactant intactId="EBI-12006120">
        <id>A0A087WZT3</id>
        <label>BOLA2-SMG1P6</label>
    </interactant>
    <organismsDiffer>false</organismsDiffer>
    <experiments>3</experiments>
</comment>
<comment type="interaction">
    <interactant intactId="EBI-7254550">
        <id>P36508</id>
    </interactant>
    <interactant intactId="EBI-12809220">
        <id>Q5SWW7</id>
        <label>C10orf55</label>
    </interactant>
    <organismsDiffer>false</organismsDiffer>
    <experiments>3</experiments>
</comment>
<comment type="interaction">
    <interactant intactId="EBI-7254550">
        <id>P36508</id>
    </interactant>
    <interactant intactId="EBI-12030460">
        <id>Q8WYQ4-2</id>
        <label>C22orf15</label>
    </interactant>
    <organismsDiffer>false</organismsDiffer>
    <experiments>3</experiments>
</comment>
<comment type="interaction">
    <interactant intactId="EBI-7254550">
        <id>P36508</id>
    </interactant>
    <interactant intactId="EBI-18036948">
        <id>Q3SXR2</id>
        <label>C3orf36</label>
    </interactant>
    <organismsDiffer>false</organismsDiffer>
    <experiments>3</experiments>
</comment>
<comment type="interaction">
    <interactant intactId="EBI-7254550">
        <id>P36508</id>
    </interactant>
    <interactant intactId="EBI-4314501">
        <id>P40199</id>
        <label>CEACAM6</label>
    </interactant>
    <organismsDiffer>false</organismsDiffer>
    <experiments>3</experiments>
</comment>
<comment type="interaction">
    <interactant intactId="EBI-7254550">
        <id>P36508</id>
    </interactant>
    <interactant intactId="EBI-742887">
        <id>Q8TAP6</id>
        <label>CEP76</label>
    </interactant>
    <organismsDiffer>false</organismsDiffer>
    <experiments>3</experiments>
</comment>
<comment type="interaction">
    <interactant intactId="EBI-7254550">
        <id>P36508</id>
    </interactant>
    <interactant intactId="EBI-2602175">
        <id>P07498</id>
        <label>CSN3</label>
    </interactant>
    <organismsDiffer>false</organismsDiffer>
    <experiments>3</experiments>
</comment>
<comment type="interaction">
    <interactant intactId="EBI-7254550">
        <id>P36508</id>
    </interactant>
    <interactant intactId="EBI-742054">
        <id>Q96D03</id>
        <label>DDIT4L</label>
    </interactant>
    <organismsDiffer>false</organismsDiffer>
    <experiments>3</experiments>
</comment>
<comment type="interaction">
    <interactant intactId="EBI-7254550">
        <id>P36508</id>
    </interactant>
    <interactant intactId="EBI-11988027">
        <id>Q9NRI5-2</id>
        <label>DISC1</label>
    </interactant>
    <organismsDiffer>false</organismsDiffer>
    <experiments>3</experiments>
</comment>
<comment type="interaction">
    <interactant intactId="EBI-7254550">
        <id>P36508</id>
    </interactant>
    <interactant intactId="EBI-744099">
        <id>Q9H0I2</id>
        <label>ENKD1</label>
    </interactant>
    <organismsDiffer>false</organismsDiffer>
    <experiments>3</experiments>
</comment>
<comment type="interaction">
    <interactant intactId="EBI-7254550">
        <id>P36508</id>
    </interactant>
    <interactant intactId="EBI-371892">
        <id>Q9Y3B2</id>
        <label>EXOSC1</label>
    </interactant>
    <organismsDiffer>false</organismsDiffer>
    <experiments>3</experiments>
</comment>
<comment type="interaction">
    <interactant intactId="EBI-7254550">
        <id>P36508</id>
    </interactant>
    <interactant intactId="EBI-12958227">
        <id>Q86W67</id>
        <label>FAM228A</label>
    </interactant>
    <organismsDiffer>false</organismsDiffer>
    <experiments>3</experiments>
</comment>
<comment type="interaction">
    <interactant intactId="EBI-7254550">
        <id>P36508</id>
    </interactant>
    <interactant intactId="EBI-6658203">
        <id>Q86YD7</id>
        <label>FAM90A1</label>
    </interactant>
    <organismsDiffer>false</organismsDiffer>
    <experiments>3</experiments>
</comment>
<comment type="interaction">
    <interactant intactId="EBI-7254550">
        <id>P36508</id>
    </interactant>
    <interactant intactId="EBI-4314687">
        <id>Q96PJ5</id>
        <label>FCRL4</label>
    </interactant>
    <organismsDiffer>false</organismsDiffer>
    <experiments>3</experiments>
</comment>
<comment type="interaction">
    <interactant intactId="EBI-7254550">
        <id>P36508</id>
    </interactant>
    <interactant intactId="EBI-701903">
        <id>Q14192</id>
        <label>FHL2</label>
    </interactant>
    <organismsDiffer>false</organismsDiffer>
    <experiments>4</experiments>
</comment>
<comment type="interaction">
    <interactant intactId="EBI-7254550">
        <id>P36508</id>
    </interactant>
    <interactant intactId="EBI-12903902">
        <id>Q8TC99</id>
        <label>FNDC8</label>
    </interactant>
    <organismsDiffer>false</organismsDiffer>
    <experiments>3</experiments>
</comment>
<comment type="interaction">
    <interactant intactId="EBI-7254550">
        <id>P36508</id>
    </interactant>
    <interactant intactId="EBI-5661036">
        <id>A1L4K1</id>
        <label>FSD2</label>
    </interactant>
    <organismsDiffer>false</organismsDiffer>
    <experiments>3</experiments>
</comment>
<comment type="interaction">
    <interactant intactId="EBI-7254550">
        <id>P36508</id>
    </interactant>
    <interactant intactId="EBI-18300553">
        <id>Q8TC17</id>
        <label>GRAPL</label>
    </interactant>
    <organismsDiffer>false</organismsDiffer>
    <experiments>3</experiments>
</comment>
<comment type="interaction">
    <interactant intactId="EBI-7254550">
        <id>P36508</id>
    </interactant>
    <interactant intactId="EBI-747204">
        <id>Q9UKT9</id>
        <label>IKZF3</label>
    </interactant>
    <organismsDiffer>false</organismsDiffer>
    <experiments>3</experiments>
</comment>
<comment type="interaction">
    <interactant intactId="EBI-7254550">
        <id>P36508</id>
    </interactant>
    <interactant intactId="EBI-4397613">
        <id>Q7L273</id>
        <label>KCTD9</label>
    </interactant>
    <organismsDiffer>false</organismsDiffer>
    <experiments>3</experiments>
</comment>
<comment type="interaction">
    <interactant intactId="EBI-7254550">
        <id>P36508</id>
    </interactant>
    <interactant intactId="EBI-2796400">
        <id>Q9UIH9</id>
        <label>KLF15</label>
    </interactant>
    <organismsDiffer>false</organismsDiffer>
    <experiments>3</experiments>
</comment>
<comment type="interaction">
    <interactant intactId="EBI-7254550">
        <id>P36508</id>
    </interactant>
    <interactant intactId="EBI-358297">
        <id>O00505</id>
        <label>KPNA3</label>
    </interactant>
    <organismsDiffer>false</organismsDiffer>
    <experiments>3</experiments>
</comment>
<comment type="interaction">
    <interactant intactId="EBI-7254550">
        <id>P36508</id>
    </interactant>
    <interactant intactId="EBI-10171697">
        <id>Q6A162</id>
        <label>KRT40</label>
    </interactant>
    <organismsDiffer>false</organismsDiffer>
    <experiments>3</experiments>
</comment>
<comment type="interaction">
    <interactant intactId="EBI-7254550">
        <id>P36508</id>
    </interactant>
    <interactant intactId="EBI-2949715">
        <id>O95678</id>
        <label>KRT75</label>
    </interactant>
    <organismsDiffer>false</organismsDiffer>
    <experiments>3</experiments>
</comment>
<comment type="interaction">
    <interactant intactId="EBI-7254550">
        <id>P36508</id>
    </interactant>
    <interactant intactId="EBI-11985629">
        <id>Q96JM7-2</id>
        <label>L3MBTL3</label>
    </interactant>
    <organismsDiffer>false</organismsDiffer>
    <experiments>3</experiments>
</comment>
<comment type="interaction">
    <interactant intactId="EBI-7254550">
        <id>P36508</id>
    </interactant>
    <interactant intactId="EBI-2339312">
        <id>P28838</id>
        <label>LAP3</label>
    </interactant>
    <organismsDiffer>false</organismsDiffer>
    <experiments>3</experiments>
</comment>
<comment type="interaction">
    <interactant intactId="EBI-7254550">
        <id>P36508</id>
    </interactant>
    <interactant intactId="EBI-1052895">
        <id>O95202</id>
        <label>LETM1</label>
    </interactant>
    <organismsDiffer>false</organismsDiffer>
    <experiments>3</experiments>
</comment>
<comment type="interaction">
    <interactant intactId="EBI-7254550">
        <id>P36508</id>
    </interactant>
    <interactant intactId="EBI-12039345">
        <id>Q9UBR4-2</id>
        <label>LHX3</label>
    </interactant>
    <organismsDiffer>false</organismsDiffer>
    <experiments>5</experiments>
</comment>
<comment type="interaction">
    <interactant intactId="EBI-7254550">
        <id>P36508</id>
    </interactant>
    <interactant intactId="EBI-2865388">
        <id>Q969G2</id>
        <label>LHX4</label>
    </interactant>
    <organismsDiffer>false</organismsDiffer>
    <experiments>3</experiments>
</comment>
<comment type="interaction">
    <interactant intactId="EBI-7254550">
        <id>P36508</id>
    </interactant>
    <interactant intactId="EBI-10258746">
        <id>Q9UPM6</id>
        <label>LHX6</label>
    </interactant>
    <organismsDiffer>false</organismsDiffer>
    <experiments>3</experiments>
</comment>
<comment type="interaction">
    <interactant intactId="EBI-7254550">
        <id>P36508</id>
    </interactant>
    <interactant intactId="EBI-748884">
        <id>Q96GY3</id>
        <label>LIN37</label>
    </interactant>
    <organismsDiffer>false</organismsDiffer>
    <experiments>3</experiments>
</comment>
<comment type="interaction">
    <interactant intactId="EBI-7254550">
        <id>P36508</id>
    </interactant>
    <interactant intactId="EBI-1389411">
        <id>Q6MZP7</id>
        <label>LIN54</label>
    </interactant>
    <organismsDiffer>false</organismsDiffer>
    <experiments>3</experiments>
</comment>
<comment type="interaction">
    <interactant intactId="EBI-7254550">
        <id>P36508</id>
    </interactant>
    <interactant intactId="EBI-8639312">
        <id>P25800</id>
        <label>LMO1</label>
    </interactant>
    <organismsDiffer>false</organismsDiffer>
    <experiments>3</experiments>
</comment>
<comment type="interaction">
    <interactant intactId="EBI-7254550">
        <id>P36508</id>
    </interactant>
    <interactant intactId="EBI-1045155">
        <id>P43360</id>
        <label>MAGEA6</label>
    </interactant>
    <organismsDiffer>false</organismsDiffer>
    <experiments>3</experiments>
</comment>
<comment type="interaction">
    <interactant intactId="EBI-7254550">
        <id>P36508</id>
    </interactant>
    <interactant intactId="EBI-12516603">
        <id>Q8WWY6</id>
        <label>MBD3L1</label>
    </interactant>
    <organismsDiffer>false</organismsDiffer>
    <experiments>3</experiments>
</comment>
<comment type="interaction">
    <interactant intactId="EBI-7254550">
        <id>P36508</id>
    </interactant>
    <interactant intactId="EBI-17671489">
        <id>Q9P267-2</id>
        <label>MBD5</label>
    </interactant>
    <organismsDiffer>false</organismsDiffer>
    <experiments>3</experiments>
</comment>
<comment type="interaction">
    <interactant intactId="EBI-7254550">
        <id>P36508</id>
    </interactant>
    <interactant intactId="EBI-13288755">
        <id>A0JLT2-2</id>
        <label>MED19</label>
    </interactant>
    <organismsDiffer>false</organismsDiffer>
    <experiments>3</experiments>
</comment>
<comment type="interaction">
    <interactant intactId="EBI-7254550">
        <id>P36508</id>
    </interactant>
    <interactant intactId="EBI-1048159">
        <id>P55081</id>
        <label>MFAP1</label>
    </interactant>
    <organismsDiffer>false</organismsDiffer>
    <experiments>3</experiments>
</comment>
<comment type="interaction">
    <interactant intactId="EBI-7254550">
        <id>P36508</id>
    </interactant>
    <interactant intactId="EBI-9675802">
        <id>Q6PF18</id>
        <label>MORN3</label>
    </interactant>
    <organismsDiffer>false</organismsDiffer>
    <experiments>3</experiments>
</comment>
<comment type="interaction">
    <interactant intactId="EBI-7254550">
        <id>P36508</id>
    </interactant>
    <interactant intactId="EBI-358272">
        <id>P52815</id>
        <label>MRPL12</label>
    </interactant>
    <organismsDiffer>false</organismsDiffer>
    <experiments>3</experiments>
</comment>
<comment type="interaction">
    <interactant intactId="EBI-7254550">
        <id>P36508</id>
    </interactant>
    <interactant intactId="EBI-2824497">
        <id>Q9H019</id>
        <label>MTFR1L</label>
    </interactant>
    <organismsDiffer>false</organismsDiffer>
    <experiments>3</experiments>
</comment>
<comment type="interaction">
    <interactant intactId="EBI-7254550">
        <id>P36508</id>
    </interactant>
    <interactant intactId="EBI-11522433">
        <id>Q5JR59-3</id>
        <label>MTUS2</label>
    </interactant>
    <organismsDiffer>false</organismsDiffer>
    <experiments>3</experiments>
</comment>
<comment type="interaction">
    <interactant intactId="EBI-7254550">
        <id>P36508</id>
    </interactant>
    <interactant intactId="EBI-17561739">
        <id>Q9BUA6</id>
        <label>MYL10</label>
    </interactant>
    <organismsDiffer>false</organismsDiffer>
    <experiments>3</experiments>
</comment>
<comment type="interaction">
    <interactant intactId="EBI-7254550">
        <id>P36508</id>
    </interactant>
    <interactant intactId="EBI-11746523">
        <id>Q14511-2</id>
        <label>NEDD9</label>
    </interactant>
    <organismsDiffer>false</organismsDiffer>
    <experiments>3</experiments>
</comment>
<comment type="interaction">
    <interactant intactId="EBI-7254550">
        <id>P36508</id>
    </interactant>
    <interactant intactId="EBI-3913975">
        <id>Q9BQI9</id>
        <label>NRIP2</label>
    </interactant>
    <organismsDiffer>false</organismsDiffer>
    <experiments>3</experiments>
</comment>
<comment type="interaction">
    <interactant intactId="EBI-7254550">
        <id>P36508</id>
    </interactant>
    <interactant intactId="EBI-2514696">
        <id>Q10713</id>
        <label>PMPCA</label>
    </interactant>
    <organismsDiffer>false</organismsDiffer>
    <experiments>3</experiments>
</comment>
<comment type="interaction">
    <interactant intactId="EBI-7254550">
        <id>P36508</id>
    </interactant>
    <interactant intactId="EBI-1389308">
        <id>Q7Z3K3</id>
        <label>POGZ</label>
    </interactant>
    <organismsDiffer>false</organismsDiffer>
    <experiments>3</experiments>
</comment>
<comment type="interaction">
    <interactant intactId="EBI-7254550">
        <id>P36508</id>
    </interactant>
    <interactant intactId="EBI-2805516">
        <id>P31321</id>
        <label>PRKAR1B</label>
    </interactant>
    <organismsDiffer>false</organismsDiffer>
    <experiments>3</experiments>
</comment>
<comment type="interaction">
    <interactant intactId="EBI-7254550">
        <id>P36508</id>
    </interactant>
    <interactant intactId="EBI-11984839">
        <id>Q96QF0-7</id>
        <label>RAB3IP</label>
    </interactant>
    <organismsDiffer>false</organismsDiffer>
    <experiments>3</experiments>
</comment>
<comment type="interaction">
    <interactant intactId="EBI-7254550">
        <id>P36508</id>
    </interactant>
    <interactant intactId="EBI-9512693">
        <id>Q53GL6</id>
        <label>RALY</label>
    </interactant>
    <organismsDiffer>false</organismsDiffer>
    <experiments>3</experiments>
</comment>
<comment type="interaction">
    <interactant intactId="EBI-7254550">
        <id>P36508</id>
    </interactant>
    <interactant intactId="EBI-10829018">
        <id>Q04864-2</id>
        <label>REL</label>
    </interactant>
    <organismsDiffer>false</organismsDiffer>
    <experiments>3</experiments>
</comment>
<comment type="interaction">
    <interactant intactId="EBI-7254550">
        <id>P36508</id>
    </interactant>
    <interactant intactId="EBI-12840198">
        <id>Q96P16-3</id>
        <label>RPRD1A</label>
    </interactant>
    <organismsDiffer>false</organismsDiffer>
    <experiments>3</experiments>
</comment>
<comment type="interaction">
    <interactant intactId="EBI-7254550">
        <id>P36508</id>
    </interactant>
    <interactant intactId="EBI-714051">
        <id>P63220</id>
        <label>RPS21</label>
    </interactant>
    <organismsDiffer>false</organismsDiffer>
    <experiments>3</experiments>
</comment>
<comment type="interaction">
    <interactant intactId="EBI-7254550">
        <id>P36508</id>
    </interactant>
    <interactant intactId="EBI-748391">
        <id>Q9BWG6</id>
        <label>SCNM1</label>
    </interactant>
    <organismsDiffer>false</organismsDiffer>
    <experiments>3</experiments>
</comment>
<comment type="interaction">
    <interactant intactId="EBI-7254550">
        <id>P36508</id>
    </interactant>
    <interactant intactId="EBI-10269374">
        <id>Q8ND83</id>
        <label>SLAIN1</label>
    </interactant>
    <organismsDiffer>false</organismsDiffer>
    <experiments>3</experiments>
</comment>
<comment type="interaction">
    <interactant intactId="EBI-7254550">
        <id>P36508</id>
    </interactant>
    <interactant intactId="EBI-9876238">
        <id>O43623</id>
        <label>SNAI2</label>
    </interactant>
    <organismsDiffer>false</organismsDiffer>
    <experiments>3</experiments>
</comment>
<comment type="interaction">
    <interactant intactId="EBI-7254550">
        <id>P36508</id>
    </interactant>
    <interactant intactId="EBI-12037215">
        <id>Q5MJ09</id>
        <label>SPANXN3</label>
    </interactant>
    <organismsDiffer>false</organismsDiffer>
    <experiments>3</experiments>
</comment>
<comment type="interaction">
    <interactant intactId="EBI-7254550">
        <id>P36508</id>
    </interactant>
    <interactant intactId="EBI-8635958">
        <id>Q6RVD6</id>
        <label>SPATA8</label>
    </interactant>
    <organismsDiffer>false</organismsDiffer>
    <experiments>3</experiments>
</comment>
<comment type="interaction">
    <interactant intactId="EBI-7254550">
        <id>P36508</id>
    </interactant>
    <interactant intactId="EBI-18115728">
        <id>Q6ZNM6</id>
        <label>SPMIP10</label>
    </interactant>
    <organismsDiffer>false</organismsDiffer>
    <experiments>3</experiments>
</comment>
<comment type="interaction">
    <interactant intactId="EBI-7254550">
        <id>P36508</id>
    </interactant>
    <interactant intactId="EBI-725557">
        <id>Q9NZ72</id>
        <label>STMN3</label>
    </interactant>
    <organismsDiffer>false</organismsDiffer>
    <experiments>3</experiments>
</comment>
<comment type="interaction">
    <interactant intactId="EBI-7254550">
        <id>P36508</id>
    </interactant>
    <interactant intactId="EBI-745958">
        <id>Q5VWN6</id>
        <label>TASOR2</label>
    </interactant>
    <organismsDiffer>false</organismsDiffer>
    <experiments>3</experiments>
</comment>
<comment type="interaction">
    <interactant intactId="EBI-7254550">
        <id>P36508</id>
    </interactant>
    <interactant intactId="EBI-8787464">
        <id>Q9NU19</id>
        <label>TBC1D22B</label>
    </interactant>
    <organismsDiffer>false</organismsDiffer>
    <experiments>3</experiments>
</comment>
<comment type="interaction">
    <interactant intactId="EBI-7254550">
        <id>P36508</id>
    </interactant>
    <interactant intactId="EBI-10239812">
        <id>Q96M29</id>
        <label>TEKT5</label>
    </interactant>
    <organismsDiffer>false</organismsDiffer>
    <experiments>3</experiments>
</comment>
<comment type="interaction">
    <interactant intactId="EBI-7254550">
        <id>P36508</id>
    </interactant>
    <interactant intactId="EBI-949244">
        <id>Q96RS0</id>
        <label>TGS1</label>
    </interactant>
    <organismsDiffer>false</organismsDiffer>
    <experiments>3</experiments>
</comment>
<comment type="interaction">
    <interactant intactId="EBI-7254550">
        <id>P36508</id>
    </interactant>
    <interactant intactId="EBI-746692">
        <id>P19237</id>
        <label>TNNI1</label>
    </interactant>
    <organismsDiffer>false</organismsDiffer>
    <experiments>3</experiments>
</comment>
<comment type="interaction">
    <interactant intactId="EBI-7254550">
        <id>P36508</id>
    </interactant>
    <interactant intactId="EBI-11975223">
        <id>Q70EL1-9</id>
        <label>USP54</label>
    </interactant>
    <organismsDiffer>false</organismsDiffer>
    <experiments>3</experiments>
</comment>
<comment type="interaction">
    <interactant intactId="EBI-7254550">
        <id>P36508</id>
    </interactant>
    <interactant intactId="EBI-302474">
        <id>Q93009</id>
        <label>USP7</label>
    </interactant>
    <organismsDiffer>false</organismsDiffer>
    <experiments>3</experiments>
</comment>
<comment type="interaction">
    <interactant intactId="EBI-7254550">
        <id>P36508</id>
    </interactant>
    <interactant intactId="EBI-12071548">
        <id>Q8TAG6</id>
        <label>VXN</label>
    </interactant>
    <organismsDiffer>false</organismsDiffer>
    <experiments>3</experiments>
</comment>
<comment type="interaction">
    <interactant intactId="EBI-7254550">
        <id>P36508</id>
    </interactant>
    <interactant intactId="EBI-7705033">
        <id>Q9BRX9</id>
        <label>WDR83</label>
    </interactant>
    <organismsDiffer>false</organismsDiffer>
    <experiments>3</experiments>
</comment>
<comment type="interaction">
    <interactant intactId="EBI-7254550">
        <id>P36508</id>
    </interactant>
    <interactant intactId="EBI-14104088">
        <id>Q53FD0-2</id>
        <label>ZC2HC1C</label>
    </interactant>
    <organismsDiffer>false</organismsDiffer>
    <experiments>3</experiments>
</comment>
<comment type="interaction">
    <interactant intactId="EBI-7254550">
        <id>P36508</id>
    </interactant>
    <interactant intactId="EBI-747993">
        <id>Q9NQZ6</id>
        <label>ZC4H2</label>
    </interactant>
    <organismsDiffer>false</organismsDiffer>
    <experiments>5</experiments>
</comment>
<comment type="interaction">
    <interactant intactId="EBI-7254550">
        <id>P36508</id>
    </interactant>
    <interactant intactId="EBI-12949277">
        <id>O95789-4</id>
        <label>ZMYM6</label>
    </interactant>
    <organismsDiffer>false</organismsDiffer>
    <experiments>3</experiments>
</comment>
<comment type="interaction">
    <interactant intactId="EBI-7254550">
        <id>P36508</id>
    </interactant>
    <interactant intactId="EBI-3923307">
        <id>Q8TAQ5</id>
        <label>ZNF420</label>
    </interactant>
    <organismsDiffer>false</organismsDiffer>
    <experiments>3</experiments>
</comment>
<comment type="interaction">
    <interactant intactId="EBI-7254550">
        <id>P36508</id>
    </interactant>
    <interactant intactId="EBI-11035148">
        <id>Q8TF50</id>
        <label>ZNF526</label>
    </interactant>
    <organismsDiffer>false</organismsDiffer>
    <experiments>3</experiments>
</comment>
<comment type="interaction">
    <interactant intactId="EBI-7254550">
        <id>P36508</id>
    </interactant>
    <interactant intactId="EBI-18560922">
        <id>O75123</id>
        <label>ZNF623</label>
    </interactant>
    <organismsDiffer>false</organismsDiffer>
    <experiments>3</experiments>
</comment>
<comment type="subcellular location">
    <subcellularLocation>
        <location evidence="4">Nucleus</location>
    </subcellularLocation>
</comment>
<comment type="alternative products">
    <event type="alternative splicing"/>
    <isoform>
        <id>P36508-1</id>
        <name>2</name>
        <sequence type="displayed"/>
    </isoform>
    <isoform>
        <id>P36508-2</id>
        <name>1</name>
        <sequence type="described" ref="VSP_006894"/>
    </isoform>
</comment>
<comment type="tissue specificity">
    <text>Testis.</text>
</comment>
<comment type="similarity">
    <text evidence="4">Belongs to the krueppel C2H2-type zinc-finger protein family.</text>
</comment>
<name>ZNF76_HUMAN</name>
<protein>
    <recommendedName>
        <fullName>Zinc finger protein 76</fullName>
    </recommendedName>
    <alternativeName>
        <fullName>Zinc finger protein 523</fullName>
    </alternativeName>
</protein>
<organism>
    <name type="scientific">Homo sapiens</name>
    <name type="common">Human</name>
    <dbReference type="NCBI Taxonomy" id="9606"/>
    <lineage>
        <taxon>Eukaryota</taxon>
        <taxon>Metazoa</taxon>
        <taxon>Chordata</taxon>
        <taxon>Craniata</taxon>
        <taxon>Vertebrata</taxon>
        <taxon>Euteleostomi</taxon>
        <taxon>Mammalia</taxon>
        <taxon>Eutheria</taxon>
        <taxon>Euarchontoglires</taxon>
        <taxon>Primates</taxon>
        <taxon>Haplorrhini</taxon>
        <taxon>Catarrhini</taxon>
        <taxon>Hominidae</taxon>
        <taxon>Homo</taxon>
    </lineage>
</organism>
<gene>
    <name type="primary">ZNF76</name>
    <name type="synonym">D6S229E</name>
    <name type="synonym">ZNF523</name>
</gene>
<sequence length="570" mass="61831">MESLGLHTVTLSDGTTAYVQQAVKGEKLLEGQVIQLEDGTTAYIHQVTVQKEALSFEDGQPVQLEDGSMAYIHRTPREGYDPSTLEAVQLEDGSTAYIHHPVAVPSESTILAVQTEVGLEDLAAEDDEGFSADAVVALEQYASKVLHDSQIPRNGKGQQVGDRAFRCGYKGCGRLYTTAHHLKVHERAHTGDRPYRCDFPSCGKAFATGYGLKSHVRTHTGEKPYKCPEELCSKAFKTSGDLQKHVRTHTGERPFQCPFEGCGRSFTTSNIRKVHVRTHTGERPYTCPEPHCGRGFTSATNYKNHVRIHTGEKPYVCTVPGCGKRFTEYSSLYKHHVVHTHCKPYTCSTCGKTYRQTSTLAMHKRSAHGELEATEESEQALYEQQQLEAASAAEESPPPKRPRIAYLSEVKEERDDIPAQVAMVTEEDGAPQVALITQDGAQQVSLSPEDLQALGSAISMVTQHGSTTLTIPSPDADLATSGTHTVTMVSADGTQTQPVTIITSGAVVAEDSSVASLRHQQVALLATANGTHIAVQLEEQQTLEEAINVATAAMQQGAVTLETTVSESGC</sequence>
<evidence type="ECO:0000255" key="1">
    <source>
        <dbReference type="PROSITE-ProRule" id="PRU00042"/>
    </source>
</evidence>
<evidence type="ECO:0000256" key="2">
    <source>
        <dbReference type="SAM" id="MobiDB-lite"/>
    </source>
</evidence>
<evidence type="ECO:0000303" key="3">
    <source>
    </source>
</evidence>
<evidence type="ECO:0000305" key="4"/>
<evidence type="ECO:0007744" key="5">
    <source>
    </source>
</evidence>
<proteinExistence type="evidence at protein level"/>
<reference key="1">
    <citation type="journal article" date="1992" name="Genomics">
        <title>A testis-expressed Zn finger gene (ZNF76) in human 6p21.3 centromeric to the MHC is closely linked to the human homolog of the T-complex gene tcp-11.</title>
        <authorList>
            <person name="Ragoussis J."/>
            <person name="Senger G."/>
            <person name="Mockridge I."/>
            <person name="Sanseau P."/>
            <person name="Ruddy S."/>
            <person name="Dudley K."/>
            <person name="Sheer D."/>
            <person name="Trowsdale J."/>
        </authorList>
    </citation>
    <scope>NUCLEOTIDE SEQUENCE [MRNA] (ISOFORM 1)</scope>
</reference>
<reference key="2">
    <citation type="submission" date="2004-10" db="EMBL/GenBank/DDBJ databases">
        <title>Cloning of human full-length CDSs in BD Creator(TM) system donor vector.</title>
        <authorList>
            <person name="Kalnine N."/>
            <person name="Chen X."/>
            <person name="Rolfs A."/>
            <person name="Halleck A."/>
            <person name="Hines L."/>
            <person name="Eisenstein S."/>
            <person name="Koundinya M."/>
            <person name="Raphael J."/>
            <person name="Moreira D."/>
            <person name="Kelley T."/>
            <person name="LaBaer J."/>
            <person name="Lin Y."/>
            <person name="Phelan M."/>
            <person name="Farmer A."/>
        </authorList>
    </citation>
    <scope>NUCLEOTIDE SEQUENCE [LARGE SCALE MRNA] (ISOFORM 2)</scope>
</reference>
<reference key="3">
    <citation type="journal article" date="2004" name="Genome Res.">
        <title>The status, quality, and expansion of the NIH full-length cDNA project: the Mammalian Gene Collection (MGC).</title>
        <authorList>
            <consortium name="The MGC Project Team"/>
        </authorList>
    </citation>
    <scope>NUCLEOTIDE SEQUENCE [LARGE SCALE MRNA] (ISOFORM 2)</scope>
    <source>
        <tissue>Placenta</tissue>
    </source>
</reference>
<reference key="4">
    <citation type="journal article" date="2017" name="Nat. Struct. Mol. Biol.">
        <title>Site-specific mapping of the human SUMO proteome reveals co-modification with phosphorylation.</title>
        <authorList>
            <person name="Hendriks I.A."/>
            <person name="Lyon D."/>
            <person name="Young C."/>
            <person name="Jensen L.J."/>
            <person name="Vertegaal A.C."/>
            <person name="Nielsen M.L."/>
        </authorList>
    </citation>
    <scope>SUMOYLATION [LARGE SCALE ANALYSIS] AT LYS-24</scope>
    <scope>IDENTIFICATION BY MASS SPECTROMETRY [LARGE SCALE ANALYSIS]</scope>
</reference>
<keyword id="KW-0025">Alternative splicing</keyword>
<keyword id="KW-0238">DNA-binding</keyword>
<keyword id="KW-1017">Isopeptide bond</keyword>
<keyword id="KW-0479">Metal-binding</keyword>
<keyword id="KW-0539">Nucleus</keyword>
<keyword id="KW-1267">Proteomics identification</keyword>
<keyword id="KW-1185">Reference proteome</keyword>
<keyword id="KW-0677">Repeat</keyword>
<keyword id="KW-0804">Transcription</keyword>
<keyword id="KW-0805">Transcription regulation</keyword>
<keyword id="KW-0832">Ubl conjugation</keyword>
<keyword id="KW-0862">Zinc</keyword>
<keyword id="KW-0863">Zinc-finger</keyword>
<accession>P36508</accession>
<accession>Q9BQB2</accession>